<accession>A3CZL2</accession>
<protein>
    <recommendedName>
        <fullName>Transcriptional regulator MraZ</fullName>
    </recommendedName>
</protein>
<comment type="subunit">
    <text evidence="1">Forms oligomers.</text>
</comment>
<comment type="subcellular location">
    <subcellularLocation>
        <location evidence="1">Cytoplasm</location>
        <location evidence="1">Nucleoid</location>
    </subcellularLocation>
</comment>
<comment type="similarity">
    <text evidence="1">Belongs to the MraZ family.</text>
</comment>
<feature type="chain" id="PRO_1000062929" description="Transcriptional regulator MraZ">
    <location>
        <begin position="1"/>
        <end position="152"/>
    </location>
</feature>
<feature type="domain" description="SpoVT-AbrB 1" evidence="2">
    <location>
        <begin position="5"/>
        <end position="52"/>
    </location>
</feature>
<feature type="domain" description="SpoVT-AbrB 2" evidence="2">
    <location>
        <begin position="81"/>
        <end position="124"/>
    </location>
</feature>
<name>MRAZ_SHEB5</name>
<reference key="1">
    <citation type="submission" date="2007-02" db="EMBL/GenBank/DDBJ databases">
        <title>Complete sequence of chromosome of Shewanella baltica OS155.</title>
        <authorList>
            <consortium name="US DOE Joint Genome Institute"/>
            <person name="Copeland A."/>
            <person name="Lucas S."/>
            <person name="Lapidus A."/>
            <person name="Barry K."/>
            <person name="Detter J.C."/>
            <person name="Glavina del Rio T."/>
            <person name="Hammon N."/>
            <person name="Israni S."/>
            <person name="Dalin E."/>
            <person name="Tice H."/>
            <person name="Pitluck S."/>
            <person name="Sims D.R."/>
            <person name="Brettin T."/>
            <person name="Bruce D."/>
            <person name="Han C."/>
            <person name="Tapia R."/>
            <person name="Brainard J."/>
            <person name="Schmutz J."/>
            <person name="Larimer F."/>
            <person name="Land M."/>
            <person name="Hauser L."/>
            <person name="Kyrpides N."/>
            <person name="Mikhailova N."/>
            <person name="Brettar I."/>
            <person name="Klappenbach J."/>
            <person name="Konstantinidis K."/>
            <person name="Rodrigues J."/>
            <person name="Tiedje J."/>
            <person name="Richardson P."/>
        </authorList>
    </citation>
    <scope>NUCLEOTIDE SEQUENCE [LARGE SCALE GENOMIC DNA]</scope>
    <source>
        <strain>OS155 / ATCC BAA-1091</strain>
    </source>
</reference>
<keyword id="KW-0963">Cytoplasm</keyword>
<keyword id="KW-0238">DNA-binding</keyword>
<keyword id="KW-1185">Reference proteome</keyword>
<keyword id="KW-0677">Repeat</keyword>
<keyword id="KW-0804">Transcription</keyword>
<keyword id="KW-0805">Transcription regulation</keyword>
<dbReference type="EMBL" id="CP000563">
    <property type="protein sequence ID" value="ABN59925.1"/>
    <property type="molecule type" value="Genomic_DNA"/>
</dbReference>
<dbReference type="RefSeq" id="WP_011845614.1">
    <property type="nucleotide sequence ID" value="NC_009052.1"/>
</dbReference>
<dbReference type="SMR" id="A3CZL2"/>
<dbReference type="STRING" id="325240.Sbal_0393"/>
<dbReference type="KEGG" id="sbl:Sbal_0393"/>
<dbReference type="HOGENOM" id="CLU_107907_2_0_6"/>
<dbReference type="OrthoDB" id="9807753at2"/>
<dbReference type="Proteomes" id="UP000001557">
    <property type="component" value="Chromosome"/>
</dbReference>
<dbReference type="GO" id="GO:0005737">
    <property type="term" value="C:cytoplasm"/>
    <property type="evidence" value="ECO:0007669"/>
    <property type="project" value="UniProtKB-UniRule"/>
</dbReference>
<dbReference type="GO" id="GO:0009295">
    <property type="term" value="C:nucleoid"/>
    <property type="evidence" value="ECO:0007669"/>
    <property type="project" value="UniProtKB-SubCell"/>
</dbReference>
<dbReference type="GO" id="GO:0003700">
    <property type="term" value="F:DNA-binding transcription factor activity"/>
    <property type="evidence" value="ECO:0007669"/>
    <property type="project" value="UniProtKB-UniRule"/>
</dbReference>
<dbReference type="GO" id="GO:0000976">
    <property type="term" value="F:transcription cis-regulatory region binding"/>
    <property type="evidence" value="ECO:0007669"/>
    <property type="project" value="TreeGrafter"/>
</dbReference>
<dbReference type="GO" id="GO:2000143">
    <property type="term" value="P:negative regulation of DNA-templated transcription initiation"/>
    <property type="evidence" value="ECO:0007669"/>
    <property type="project" value="TreeGrafter"/>
</dbReference>
<dbReference type="CDD" id="cd16321">
    <property type="entry name" value="MraZ_C"/>
    <property type="match status" value="1"/>
</dbReference>
<dbReference type="CDD" id="cd16320">
    <property type="entry name" value="MraZ_N"/>
    <property type="match status" value="1"/>
</dbReference>
<dbReference type="FunFam" id="3.40.1550.20:FF:000001">
    <property type="entry name" value="Transcriptional regulator MraZ"/>
    <property type="match status" value="1"/>
</dbReference>
<dbReference type="Gene3D" id="3.40.1550.20">
    <property type="entry name" value="Transcriptional regulator MraZ domain"/>
    <property type="match status" value="1"/>
</dbReference>
<dbReference type="HAMAP" id="MF_01008">
    <property type="entry name" value="MraZ"/>
    <property type="match status" value="1"/>
</dbReference>
<dbReference type="InterPro" id="IPR003444">
    <property type="entry name" value="MraZ"/>
</dbReference>
<dbReference type="InterPro" id="IPR035644">
    <property type="entry name" value="MraZ_C"/>
</dbReference>
<dbReference type="InterPro" id="IPR020603">
    <property type="entry name" value="MraZ_dom"/>
</dbReference>
<dbReference type="InterPro" id="IPR035642">
    <property type="entry name" value="MraZ_N"/>
</dbReference>
<dbReference type="InterPro" id="IPR038619">
    <property type="entry name" value="MraZ_sf"/>
</dbReference>
<dbReference type="InterPro" id="IPR007159">
    <property type="entry name" value="SpoVT-AbrB_dom"/>
</dbReference>
<dbReference type="InterPro" id="IPR037914">
    <property type="entry name" value="SpoVT-AbrB_sf"/>
</dbReference>
<dbReference type="NCBIfam" id="TIGR00242">
    <property type="entry name" value="division/cell wall cluster transcriptional repressor MraZ"/>
    <property type="match status" value="1"/>
</dbReference>
<dbReference type="PANTHER" id="PTHR34701">
    <property type="entry name" value="TRANSCRIPTIONAL REGULATOR MRAZ"/>
    <property type="match status" value="1"/>
</dbReference>
<dbReference type="PANTHER" id="PTHR34701:SF1">
    <property type="entry name" value="TRANSCRIPTIONAL REGULATOR MRAZ"/>
    <property type="match status" value="1"/>
</dbReference>
<dbReference type="Pfam" id="PF02381">
    <property type="entry name" value="MraZ"/>
    <property type="match status" value="2"/>
</dbReference>
<dbReference type="SUPFAM" id="SSF89447">
    <property type="entry name" value="AbrB/MazE/MraZ-like"/>
    <property type="match status" value="1"/>
</dbReference>
<dbReference type="PROSITE" id="PS51740">
    <property type="entry name" value="SPOVT_ABRB"/>
    <property type="match status" value="2"/>
</dbReference>
<sequence>MFRGASAINLDTKGRIAIPVRYREPLQLEHQGRIVITVDIQSACLLLYPIHEWELIEAKLLKLSDTDKTQRSLKRLLLGYAHEVELDGNGRILLPPPLRQYANLDKRIMLVGQLNKFELWDEQSWLQQIDECLETIRSEELASNERLADFSL</sequence>
<evidence type="ECO:0000255" key="1">
    <source>
        <dbReference type="HAMAP-Rule" id="MF_01008"/>
    </source>
</evidence>
<evidence type="ECO:0000255" key="2">
    <source>
        <dbReference type="PROSITE-ProRule" id="PRU01076"/>
    </source>
</evidence>
<organism>
    <name type="scientific">Shewanella baltica (strain OS155 / ATCC BAA-1091)</name>
    <dbReference type="NCBI Taxonomy" id="325240"/>
    <lineage>
        <taxon>Bacteria</taxon>
        <taxon>Pseudomonadati</taxon>
        <taxon>Pseudomonadota</taxon>
        <taxon>Gammaproteobacteria</taxon>
        <taxon>Alteromonadales</taxon>
        <taxon>Shewanellaceae</taxon>
        <taxon>Shewanella</taxon>
    </lineage>
</organism>
<gene>
    <name evidence="1" type="primary">mraZ</name>
    <name type="ordered locus">Sbal_0393</name>
</gene>
<proteinExistence type="inferred from homology"/>